<keyword id="KW-0997">Cell inner membrane</keyword>
<keyword id="KW-1003">Cell membrane</keyword>
<keyword id="KW-0472">Membrane</keyword>
<keyword id="KW-0520">NAD</keyword>
<keyword id="KW-0874">Quinone</keyword>
<keyword id="KW-1278">Translocase</keyword>
<keyword id="KW-0813">Transport</keyword>
<keyword id="KW-0830">Ubiquinone</keyword>
<name>NUOD_XANC8</name>
<reference key="1">
    <citation type="journal article" date="2005" name="Genome Res.">
        <title>Comparative and functional genomic analyses of the pathogenicity of phytopathogen Xanthomonas campestris pv. campestris.</title>
        <authorList>
            <person name="Qian W."/>
            <person name="Jia Y."/>
            <person name="Ren S.-X."/>
            <person name="He Y.-Q."/>
            <person name="Feng J.-X."/>
            <person name="Lu L.-F."/>
            <person name="Sun Q."/>
            <person name="Ying G."/>
            <person name="Tang D.-J."/>
            <person name="Tang H."/>
            <person name="Wu W."/>
            <person name="Hao P."/>
            <person name="Wang L."/>
            <person name="Jiang B.-L."/>
            <person name="Zeng S."/>
            <person name="Gu W.-Y."/>
            <person name="Lu G."/>
            <person name="Rong L."/>
            <person name="Tian Y."/>
            <person name="Yao Z."/>
            <person name="Fu G."/>
            <person name="Chen B."/>
            <person name="Fang R."/>
            <person name="Qiang B."/>
            <person name="Chen Z."/>
            <person name="Zhao G.-P."/>
            <person name="Tang J.-L."/>
            <person name="He C."/>
        </authorList>
    </citation>
    <scope>NUCLEOTIDE SEQUENCE [LARGE SCALE GENOMIC DNA]</scope>
    <source>
        <strain>8004</strain>
    </source>
</reference>
<gene>
    <name evidence="1" type="primary">nuoD</name>
    <name type="ordered locus">XC_1592</name>
</gene>
<evidence type="ECO:0000255" key="1">
    <source>
        <dbReference type="HAMAP-Rule" id="MF_01358"/>
    </source>
</evidence>
<organism>
    <name type="scientific">Xanthomonas campestris pv. campestris (strain 8004)</name>
    <dbReference type="NCBI Taxonomy" id="314565"/>
    <lineage>
        <taxon>Bacteria</taxon>
        <taxon>Pseudomonadati</taxon>
        <taxon>Pseudomonadota</taxon>
        <taxon>Gammaproteobacteria</taxon>
        <taxon>Lysobacterales</taxon>
        <taxon>Lysobacteraceae</taxon>
        <taxon>Xanthomonas</taxon>
    </lineage>
</organism>
<sequence length="435" mass="49410">MSEYRQATDAFASNPVESKQEIRNYTMNFGPQHPAAHGVLRLILEMDGETVVRADPHIGLLHRGTEKLAESKPFNQSVPYMDRLDYVSMMCNEHAYVRAIESLMGIEAPERAQYIRTMFDEITRIKNHLMWVGSNALDLGAMAVMLYAFREREELMDVYEAVSGARMHAAYYRPGGVYRDLPDRMPKYKESRWHKGGALTKLNAAREGSMLDFLENFTDTFPSRVDEYETLLTENRIWKQRTVDVGIISPDLARAWGMTGPMLRGSGIEWDLRKKQPYAKYDAVDFDVPVGTNGDCYDRYLVRVAEMRESNRIIKQCVKWLKANPGPVMVTNFKVAPPSREGMKDDMEALIHHFKLFSEGYCVPAGETYCAVEAPKGEFGCYLMSDGANKPFRVHLRAPGFAHLSSMDAVVRGYLLADVVAMIGTYDLVFGEVDR</sequence>
<dbReference type="EC" id="7.1.1.-" evidence="1"/>
<dbReference type="EMBL" id="CP000050">
    <property type="protein sequence ID" value="AAY48658.1"/>
    <property type="molecule type" value="Genomic_DNA"/>
</dbReference>
<dbReference type="RefSeq" id="WP_011037656.1">
    <property type="nucleotide sequence ID" value="NZ_CP155948.1"/>
</dbReference>
<dbReference type="SMR" id="Q4UWB5"/>
<dbReference type="KEGG" id="xcb:XC_1592"/>
<dbReference type="HOGENOM" id="CLU_015134_1_1_6"/>
<dbReference type="Proteomes" id="UP000000420">
    <property type="component" value="Chromosome"/>
</dbReference>
<dbReference type="GO" id="GO:0005886">
    <property type="term" value="C:plasma membrane"/>
    <property type="evidence" value="ECO:0007669"/>
    <property type="project" value="UniProtKB-SubCell"/>
</dbReference>
<dbReference type="GO" id="GO:0051287">
    <property type="term" value="F:NAD binding"/>
    <property type="evidence" value="ECO:0007669"/>
    <property type="project" value="InterPro"/>
</dbReference>
<dbReference type="GO" id="GO:0050136">
    <property type="term" value="F:NADH:ubiquinone reductase (non-electrogenic) activity"/>
    <property type="evidence" value="ECO:0007669"/>
    <property type="project" value="UniProtKB-UniRule"/>
</dbReference>
<dbReference type="GO" id="GO:0048038">
    <property type="term" value="F:quinone binding"/>
    <property type="evidence" value="ECO:0007669"/>
    <property type="project" value="UniProtKB-KW"/>
</dbReference>
<dbReference type="FunFam" id="1.10.645.10:FF:000005">
    <property type="entry name" value="NADH-quinone oxidoreductase subunit D"/>
    <property type="match status" value="1"/>
</dbReference>
<dbReference type="Gene3D" id="1.10.645.10">
    <property type="entry name" value="Cytochrome-c3 Hydrogenase, chain B"/>
    <property type="match status" value="1"/>
</dbReference>
<dbReference type="HAMAP" id="MF_01358">
    <property type="entry name" value="NDH1_NuoD"/>
    <property type="match status" value="1"/>
</dbReference>
<dbReference type="InterPro" id="IPR001135">
    <property type="entry name" value="NADH_Q_OxRdtase_suD"/>
</dbReference>
<dbReference type="InterPro" id="IPR014029">
    <property type="entry name" value="NADH_UbQ_OxRdtase_49kDa_CS"/>
</dbReference>
<dbReference type="InterPro" id="IPR022885">
    <property type="entry name" value="NDH1_su_D/H"/>
</dbReference>
<dbReference type="InterPro" id="IPR029014">
    <property type="entry name" value="NiFe-Hase_large"/>
</dbReference>
<dbReference type="NCBIfam" id="TIGR01962">
    <property type="entry name" value="NuoD"/>
    <property type="match status" value="1"/>
</dbReference>
<dbReference type="NCBIfam" id="NF004739">
    <property type="entry name" value="PRK06075.1"/>
    <property type="match status" value="1"/>
</dbReference>
<dbReference type="PANTHER" id="PTHR11993:SF10">
    <property type="entry name" value="NADH DEHYDROGENASE [UBIQUINONE] IRON-SULFUR PROTEIN 2, MITOCHONDRIAL"/>
    <property type="match status" value="1"/>
</dbReference>
<dbReference type="PANTHER" id="PTHR11993">
    <property type="entry name" value="NADH-UBIQUINONE OXIDOREDUCTASE 49 KDA SUBUNIT"/>
    <property type="match status" value="1"/>
</dbReference>
<dbReference type="Pfam" id="PF00346">
    <property type="entry name" value="Complex1_49kDa"/>
    <property type="match status" value="1"/>
</dbReference>
<dbReference type="SUPFAM" id="SSF56762">
    <property type="entry name" value="HydB/Nqo4-like"/>
    <property type="match status" value="1"/>
</dbReference>
<dbReference type="PROSITE" id="PS00535">
    <property type="entry name" value="COMPLEX1_49K"/>
    <property type="match status" value="1"/>
</dbReference>
<proteinExistence type="inferred from homology"/>
<accession>Q4UWB5</accession>
<protein>
    <recommendedName>
        <fullName evidence="1">NADH-quinone oxidoreductase subunit D</fullName>
        <ecNumber evidence="1">7.1.1.-</ecNumber>
    </recommendedName>
    <alternativeName>
        <fullName evidence="1">NADH dehydrogenase I subunit D</fullName>
    </alternativeName>
    <alternativeName>
        <fullName evidence="1">NDH-1 subunit D</fullName>
    </alternativeName>
</protein>
<feature type="chain" id="PRO_0000371950" description="NADH-quinone oxidoreductase subunit D">
    <location>
        <begin position="1"/>
        <end position="435"/>
    </location>
</feature>
<comment type="function">
    <text evidence="1">NDH-1 shuttles electrons from NADH, via FMN and iron-sulfur (Fe-S) centers, to quinones in the respiratory chain. The immediate electron acceptor for the enzyme in this species is believed to be ubiquinone. Couples the redox reaction to proton translocation (for every two electrons transferred, four hydrogen ions are translocated across the cytoplasmic membrane), and thus conserves the redox energy in a proton gradient.</text>
</comment>
<comment type="catalytic activity">
    <reaction evidence="1">
        <text>a quinone + NADH + 5 H(+)(in) = a quinol + NAD(+) + 4 H(+)(out)</text>
        <dbReference type="Rhea" id="RHEA:57888"/>
        <dbReference type="ChEBI" id="CHEBI:15378"/>
        <dbReference type="ChEBI" id="CHEBI:24646"/>
        <dbReference type="ChEBI" id="CHEBI:57540"/>
        <dbReference type="ChEBI" id="CHEBI:57945"/>
        <dbReference type="ChEBI" id="CHEBI:132124"/>
    </reaction>
</comment>
<comment type="subunit">
    <text evidence="1">NDH-1 is composed of 14 different subunits. Subunits NuoB, C, D, E, F, and G constitute the peripheral sector of the complex.</text>
</comment>
<comment type="subcellular location">
    <subcellularLocation>
        <location evidence="1">Cell inner membrane</location>
        <topology evidence="1">Peripheral membrane protein</topology>
        <orientation evidence="1">Cytoplasmic side</orientation>
    </subcellularLocation>
</comment>
<comment type="similarity">
    <text evidence="1">Belongs to the complex I 49 kDa subunit family.</text>
</comment>